<organismHost>
    <name type="scientific">Homo sapiens</name>
    <name type="common">Human</name>
    <dbReference type="NCBI Taxonomy" id="9606"/>
</organismHost>
<organism>
    <name type="scientific">Vaccinia virus (strain LC16m8)</name>
    <name type="common">VACV</name>
    <dbReference type="NCBI Taxonomy" id="10248"/>
    <lineage>
        <taxon>Viruses</taxon>
        <taxon>Varidnaviria</taxon>
        <taxon>Bamfordvirae</taxon>
        <taxon>Nucleocytoviricota</taxon>
        <taxon>Pokkesviricetes</taxon>
        <taxon>Chitovirales</taxon>
        <taxon>Poxviridae</taxon>
        <taxon>Chordopoxvirinae</taxon>
        <taxon>Orthopoxvirus</taxon>
        <taxon>Vaccinia virus</taxon>
    </lineage>
</organism>
<name>GAAP_VACC8</name>
<gene>
    <name type="primary">L6</name>
    <name type="ordered locus">List196</name>
</gene>
<protein>
    <recommendedName>
        <fullName>Golgi anti-apoptotic protein</fullName>
        <shortName>GAAP</shortName>
    </recommendedName>
</protein>
<sequence length="237" mass="26244">MAMPSLSACSSIEDDFNYGSSVASASVHIRMAFLRKVYGILCLQFLLTTATTAVFLYFDCMRTFIQGSPVLILASMFGSIGLIFALTLHRHKHPLNLYLLCGFTLSESLTLASVVTFYDVHVVMQAFMLTTAAFLALTTYTLQSKRDFSKLGAGLFAALWILILSGLLGIFVQNETVKLVLSAFGALVFCGFIIYDTHSLIHKLSPEEYVLASINLYLDIINLFLHLLQLLEVSNKK</sequence>
<evidence type="ECO:0000250" key="1">
    <source>
        <dbReference type="UniProtKB" id="P0DXN1"/>
    </source>
</evidence>
<evidence type="ECO:0000255" key="2"/>
<evidence type="ECO:0000305" key="3"/>
<feature type="chain" id="PRO_0000461179" description="Golgi anti-apoptotic protein">
    <location>
        <begin position="1"/>
        <end position="237"/>
    </location>
</feature>
<feature type="topological domain" description="Cytoplasmic" evidence="2">
    <location>
        <begin position="1"/>
        <end position="37"/>
    </location>
</feature>
<feature type="transmembrane region" description="Helical" evidence="2">
    <location>
        <begin position="38"/>
        <end position="58"/>
    </location>
</feature>
<feature type="topological domain" description="Lumenal" evidence="2">
    <location>
        <begin position="59"/>
        <end position="67"/>
    </location>
</feature>
<feature type="transmembrane region" description="Helical" evidence="2">
    <location>
        <begin position="68"/>
        <end position="88"/>
    </location>
</feature>
<feature type="topological domain" description="Cytoplasmic" evidence="2">
    <location>
        <begin position="89"/>
        <end position="94"/>
    </location>
</feature>
<feature type="transmembrane region" description="Helical" evidence="2">
    <location>
        <begin position="95"/>
        <end position="115"/>
    </location>
</feature>
<feature type="topological domain" description="Lumenal" evidence="2">
    <location>
        <position position="116"/>
    </location>
</feature>
<feature type="transmembrane region" description="Helical" evidence="2">
    <location>
        <begin position="117"/>
        <end position="137"/>
    </location>
</feature>
<feature type="topological domain" description="Cytoplasmic" evidence="2">
    <location>
        <begin position="138"/>
        <end position="151"/>
    </location>
</feature>
<feature type="transmembrane region" description="Helical" evidence="2">
    <location>
        <begin position="152"/>
        <end position="172"/>
    </location>
</feature>
<feature type="topological domain" description="Lumenal" evidence="2">
    <location>
        <begin position="173"/>
        <end position="174"/>
    </location>
</feature>
<feature type="transmembrane region" description="Helical" evidence="2">
    <location>
        <begin position="175"/>
        <end position="195"/>
    </location>
</feature>
<feature type="topological domain" description="Cytoplasmic" evidence="2">
    <location>
        <begin position="196"/>
        <end position="209"/>
    </location>
</feature>
<feature type="intramembrane region" description="Helical" evidence="2">
    <location>
        <begin position="210"/>
        <end position="230"/>
    </location>
</feature>
<feature type="topological domain" description="Cytoplasmic" evidence="2">
    <location>
        <begin position="231"/>
        <end position="237"/>
    </location>
</feature>
<accession>P0DXN3</accession>
<accession>Q49P94</accession>
<keyword id="KW-0053">Apoptosis</keyword>
<keyword id="KW-1040">Host Golgi apparatus</keyword>
<keyword id="KW-1043">Host membrane</keyword>
<keyword id="KW-0472">Membrane</keyword>
<keyword id="KW-0812">Transmembrane</keyword>
<keyword id="KW-1133">Transmembrane helix</keyword>
<dbReference type="EMBL" id="AY678275">
    <property type="protein sequence ID" value="AAW23650.1"/>
    <property type="molecule type" value="Genomic_DNA"/>
</dbReference>
<dbReference type="SMR" id="P0DXN3"/>
<dbReference type="Proteomes" id="UP000173158">
    <property type="component" value="Segment"/>
</dbReference>
<dbReference type="GO" id="GO:0044178">
    <property type="term" value="C:host cell Golgi membrane"/>
    <property type="evidence" value="ECO:0007669"/>
    <property type="project" value="UniProtKB-SubCell"/>
</dbReference>
<dbReference type="GO" id="GO:0016020">
    <property type="term" value="C:membrane"/>
    <property type="evidence" value="ECO:0007669"/>
    <property type="project" value="UniProtKB-KW"/>
</dbReference>
<dbReference type="GO" id="GO:0043066">
    <property type="term" value="P:negative regulation of apoptotic process"/>
    <property type="evidence" value="ECO:0007669"/>
    <property type="project" value="TreeGrafter"/>
</dbReference>
<dbReference type="InterPro" id="IPR006214">
    <property type="entry name" value="Bax_inhibitor_1-related"/>
</dbReference>
<dbReference type="PANTHER" id="PTHR23291">
    <property type="entry name" value="BAX INHIBITOR-RELATED"/>
    <property type="match status" value="1"/>
</dbReference>
<dbReference type="PANTHER" id="PTHR23291:SF50">
    <property type="entry name" value="PROTEIN LIFEGUARD 4"/>
    <property type="match status" value="1"/>
</dbReference>
<dbReference type="Pfam" id="PF01027">
    <property type="entry name" value="Bax1-I"/>
    <property type="match status" value="1"/>
</dbReference>
<comment type="function">
    <text evidence="1">May affect virulence through inhibition of apoptosis.</text>
</comment>
<comment type="subcellular location">
    <subcellularLocation>
        <location evidence="1">Host Golgi apparatus membrane</location>
        <topology evidence="1">Multi-pass membrane protein</topology>
    </subcellularLocation>
</comment>
<comment type="similarity">
    <text evidence="3">Belongs to the BI1 family. LFG subfamily.</text>
</comment>
<proteinExistence type="inferred from homology"/>
<reference key="1">
    <citation type="journal article" date="2005" name="J. Virol.">
        <title>An attenuated LC16m8 smallpox vaccine: analysis of full-genome sequence and induction of immune protection.</title>
        <authorList>
            <person name="Morikawa S."/>
            <person name="Sakiyama T."/>
            <person name="Hasegawa H."/>
            <person name="Saijo M."/>
            <person name="Maeda A."/>
            <person name="Kurane I."/>
            <person name="Maeno G."/>
            <person name="Kimura J."/>
            <person name="Hirama C."/>
            <person name="Yoshida T."/>
            <person name="Asahi-Ozaki Y."/>
            <person name="Sata T."/>
            <person name="Kurata T."/>
            <person name="Kojima A."/>
        </authorList>
    </citation>
    <scope>NUCLEOTIDE SEQUENCE [LARGE SCALE GENOMIC DNA]</scope>
    <source>
        <strain>LC16m8</strain>
    </source>
</reference>